<reference key="1">
    <citation type="journal article" date="2008" name="J. Bacteriol.">
        <title>The pangenome structure of Escherichia coli: comparative genomic analysis of E. coli commensal and pathogenic isolates.</title>
        <authorList>
            <person name="Rasko D.A."/>
            <person name="Rosovitz M.J."/>
            <person name="Myers G.S.A."/>
            <person name="Mongodin E.F."/>
            <person name="Fricke W.F."/>
            <person name="Gajer P."/>
            <person name="Crabtree J."/>
            <person name="Sebaihia M."/>
            <person name="Thomson N.R."/>
            <person name="Chaudhuri R."/>
            <person name="Henderson I.R."/>
            <person name="Sperandio V."/>
            <person name="Ravel J."/>
        </authorList>
    </citation>
    <scope>NUCLEOTIDE SEQUENCE [LARGE SCALE GENOMIC DNA]</scope>
    <source>
        <strain>HS</strain>
    </source>
</reference>
<accession>A8A7G7</accession>
<protein>
    <recommendedName>
        <fullName evidence="1">Cation/acetate symporter ActP</fullName>
    </recommendedName>
    <alternativeName>
        <fullName evidence="1">Acetate permease</fullName>
    </alternativeName>
    <alternativeName>
        <fullName evidence="1">Acetate transporter ActP</fullName>
    </alternativeName>
</protein>
<organism>
    <name type="scientific">Escherichia coli O9:H4 (strain HS)</name>
    <dbReference type="NCBI Taxonomy" id="331112"/>
    <lineage>
        <taxon>Bacteria</taxon>
        <taxon>Pseudomonadati</taxon>
        <taxon>Pseudomonadota</taxon>
        <taxon>Gammaproteobacteria</taxon>
        <taxon>Enterobacterales</taxon>
        <taxon>Enterobacteriaceae</taxon>
        <taxon>Escherichia</taxon>
    </lineage>
</organism>
<name>ACTP_ECOHS</name>
<proteinExistence type="inferred from homology"/>
<comment type="function">
    <text evidence="1">Transports acetate.</text>
</comment>
<comment type="subcellular location">
    <subcellularLocation>
        <location evidence="1">Cell inner membrane</location>
        <topology evidence="1">Multi-pass membrane protein</topology>
    </subcellularLocation>
</comment>
<comment type="similarity">
    <text evidence="1">Belongs to the sodium:solute symporter (SSF) (TC 2.A.21) family.</text>
</comment>
<feature type="chain" id="PRO_1000068515" description="Cation/acetate symporter ActP">
    <location>
        <begin position="1"/>
        <end position="549"/>
    </location>
</feature>
<feature type="transmembrane region" description="Helical" evidence="1">
    <location>
        <begin position="33"/>
        <end position="53"/>
    </location>
</feature>
<feature type="transmembrane region" description="Helical" evidence="1">
    <location>
        <begin position="77"/>
        <end position="97"/>
    </location>
</feature>
<feature type="transmembrane region" description="Helical" evidence="1">
    <location>
        <begin position="103"/>
        <end position="123"/>
    </location>
</feature>
<feature type="transmembrane region" description="Helical" evidence="1">
    <location>
        <begin position="148"/>
        <end position="168"/>
    </location>
</feature>
<feature type="transmembrane region" description="Helical" evidence="1">
    <location>
        <begin position="183"/>
        <end position="203"/>
    </location>
</feature>
<feature type="transmembrane region" description="Helical" evidence="1">
    <location>
        <begin position="206"/>
        <end position="226"/>
    </location>
</feature>
<feature type="transmembrane region" description="Helical" evidence="1">
    <location>
        <begin position="262"/>
        <end position="282"/>
    </location>
</feature>
<feature type="transmembrane region" description="Helical" evidence="1">
    <location>
        <begin position="303"/>
        <end position="323"/>
    </location>
</feature>
<feature type="transmembrane region" description="Helical" evidence="1">
    <location>
        <begin position="355"/>
        <end position="375"/>
    </location>
</feature>
<feature type="transmembrane region" description="Helical" evidence="1">
    <location>
        <begin position="404"/>
        <end position="424"/>
    </location>
</feature>
<feature type="transmembrane region" description="Helical" evidence="1">
    <location>
        <begin position="428"/>
        <end position="448"/>
    </location>
</feature>
<feature type="transmembrane region" description="Helical" evidence="1">
    <location>
        <begin position="464"/>
        <end position="484"/>
    </location>
</feature>
<feature type="transmembrane region" description="Helical" evidence="1">
    <location>
        <begin position="493"/>
        <end position="513"/>
    </location>
</feature>
<evidence type="ECO:0000255" key="1">
    <source>
        <dbReference type="HAMAP-Rule" id="MF_01426"/>
    </source>
</evidence>
<keyword id="KW-0997">Cell inner membrane</keyword>
<keyword id="KW-1003">Cell membrane</keyword>
<keyword id="KW-0406">Ion transport</keyword>
<keyword id="KW-0472">Membrane</keyword>
<keyword id="KW-0915">Sodium</keyword>
<keyword id="KW-0739">Sodium transport</keyword>
<keyword id="KW-0769">Symport</keyword>
<keyword id="KW-0812">Transmembrane</keyword>
<keyword id="KW-1133">Transmembrane helix</keyword>
<keyword id="KW-0813">Transport</keyword>
<gene>
    <name evidence="1" type="primary">actP</name>
    <name type="ordered locus">EcHS_A4311</name>
</gene>
<dbReference type="EMBL" id="CP000802">
    <property type="protein sequence ID" value="ABV08471.1"/>
    <property type="molecule type" value="Genomic_DNA"/>
</dbReference>
<dbReference type="RefSeq" id="WP_000832572.1">
    <property type="nucleotide sequence ID" value="NC_009800.1"/>
</dbReference>
<dbReference type="SMR" id="A8A7G7"/>
<dbReference type="GeneID" id="75204210"/>
<dbReference type="KEGG" id="ecx:EcHS_A4311"/>
<dbReference type="HOGENOM" id="CLU_018808_8_3_6"/>
<dbReference type="GO" id="GO:0005886">
    <property type="term" value="C:plasma membrane"/>
    <property type="evidence" value="ECO:0007669"/>
    <property type="project" value="UniProtKB-SubCell"/>
</dbReference>
<dbReference type="GO" id="GO:0015123">
    <property type="term" value="F:acetate transmembrane transporter activity"/>
    <property type="evidence" value="ECO:0007669"/>
    <property type="project" value="UniProtKB-UniRule"/>
</dbReference>
<dbReference type="GO" id="GO:0043879">
    <property type="term" value="F:glycolate transmembrane transporter activity"/>
    <property type="evidence" value="ECO:0007669"/>
    <property type="project" value="InterPro"/>
</dbReference>
<dbReference type="GO" id="GO:0015293">
    <property type="term" value="F:symporter activity"/>
    <property type="evidence" value="ECO:0007669"/>
    <property type="project" value="UniProtKB-KW"/>
</dbReference>
<dbReference type="GO" id="GO:0006847">
    <property type="term" value="P:plasma membrane acetate transport"/>
    <property type="evidence" value="ECO:0007669"/>
    <property type="project" value="TreeGrafter"/>
</dbReference>
<dbReference type="GO" id="GO:0006814">
    <property type="term" value="P:sodium ion transport"/>
    <property type="evidence" value="ECO:0007669"/>
    <property type="project" value="UniProtKB-KW"/>
</dbReference>
<dbReference type="CDD" id="cd11480">
    <property type="entry name" value="SLC5sbd_u4"/>
    <property type="match status" value="1"/>
</dbReference>
<dbReference type="FunFam" id="1.20.1730.10:FF:000001">
    <property type="entry name" value="Cation/acetate symporter ActP"/>
    <property type="match status" value="1"/>
</dbReference>
<dbReference type="Gene3D" id="1.20.1730.10">
    <property type="entry name" value="Sodium/glucose cotransporter"/>
    <property type="match status" value="1"/>
</dbReference>
<dbReference type="HAMAP" id="MF_01426">
    <property type="entry name" value="Acet_symport_ActP"/>
    <property type="match status" value="1"/>
</dbReference>
<dbReference type="InterPro" id="IPR014083">
    <property type="entry name" value="Cation/Ac_symporter_ActP"/>
</dbReference>
<dbReference type="InterPro" id="IPR038377">
    <property type="entry name" value="Na/Glc_symporter_sf"/>
</dbReference>
<dbReference type="InterPro" id="IPR001734">
    <property type="entry name" value="Na/solute_symporter"/>
</dbReference>
<dbReference type="InterPro" id="IPR018212">
    <property type="entry name" value="Na/solute_symporter_CS"/>
</dbReference>
<dbReference type="InterPro" id="IPR050277">
    <property type="entry name" value="Sodium:Solute_Symporter"/>
</dbReference>
<dbReference type="NCBIfam" id="NF006903">
    <property type="entry name" value="PRK09395.1"/>
    <property type="match status" value="1"/>
</dbReference>
<dbReference type="NCBIfam" id="NF009135">
    <property type="entry name" value="PRK12488.1"/>
    <property type="match status" value="1"/>
</dbReference>
<dbReference type="NCBIfam" id="TIGR00813">
    <property type="entry name" value="sss"/>
    <property type="match status" value="1"/>
</dbReference>
<dbReference type="NCBIfam" id="TIGR02711">
    <property type="entry name" value="symport_actP"/>
    <property type="match status" value="1"/>
</dbReference>
<dbReference type="PANTHER" id="PTHR48086:SF6">
    <property type="entry name" value="CATION_ACETATE SYMPORTER ACTP"/>
    <property type="match status" value="1"/>
</dbReference>
<dbReference type="PANTHER" id="PTHR48086">
    <property type="entry name" value="SODIUM/PROLINE SYMPORTER-RELATED"/>
    <property type="match status" value="1"/>
</dbReference>
<dbReference type="Pfam" id="PF00474">
    <property type="entry name" value="SSF"/>
    <property type="match status" value="1"/>
</dbReference>
<dbReference type="PROSITE" id="PS00456">
    <property type="entry name" value="NA_SOLUT_SYMP_1"/>
    <property type="match status" value="1"/>
</dbReference>
<dbReference type="PROSITE" id="PS00457">
    <property type="entry name" value="NA_SOLUT_SYMP_2"/>
    <property type="match status" value="1"/>
</dbReference>
<dbReference type="PROSITE" id="PS50283">
    <property type="entry name" value="NA_SOLUT_SYMP_3"/>
    <property type="match status" value="1"/>
</dbReference>
<sequence>MKRVLTALAATLPFAANAADAISGAVERQPTNWQAIIMFLIFVVFTLGITYWASKRVRSRSDYYTAGGNITGFQNGLAIAGDYMSAASFLGISALVFTSGYDGLIYSLGFLVGWPIILFLIAERLRNLGRYTFADVASYRLKQGPIRILSACGSLVVVALYLIAQMVGAGKLIELLFGLNYHIAVVLVGVLMMMYVLFGGMLATTWVQIIKAVLLLFGASFMAFMVMKHVGFSFNNLFSEAMAVHPKGVDIMKPGGLVKDPISALSLGLGLMFGTAGLPHILMRFFTVSDAREARKSVFYATGFMGYFYILTFIIGFGAIMLVGANPEYKDAAGHLIGGNNMAAVHLANAVGGNLFLGFISAVAFATILAVVAGLTLAGASAVSHDLYANVFKKGATEREELRVSKITVLILGVIAIILGVLFENQNIAFMVGLAFAIAASCNFPIILLSMYWSKLTTRGAMMGGWLGLITAVVLMILGPTIWVQILGHEKAIFPYEYPALFSISVAFLGIWFFSATDNSAEGARERELFRAQFIRSQTGFGVEQGRAH</sequence>